<sequence length="184" mass="20909">MNEKIKPFEGKMQKSLDSLKEEYVGIRAGRANPHLLDKLRVDYYGTPSAIQAVANVSVPEARVIQIQPWEAKLIKEIEKAIIASDLGLTPSNDGKVIRLVFPELTEERRKDLVKDVKKKAENTKVAVRNVRRDANDAIKKLAKANEISEDEQKQIEDEIQKITDKFITEVDKVMEDKSKEILTV</sequence>
<keyword id="KW-0963">Cytoplasm</keyword>
<keyword id="KW-0648">Protein biosynthesis</keyword>
<keyword id="KW-1185">Reference proteome</keyword>
<evidence type="ECO:0000255" key="1">
    <source>
        <dbReference type="HAMAP-Rule" id="MF_00040"/>
    </source>
</evidence>
<name>RRF_LACP7</name>
<organism>
    <name type="scientific">Lachnoclostridium phytofermentans (strain ATCC 700394 / DSM 18823 / ISDg)</name>
    <name type="common">Clostridium phytofermentans</name>
    <dbReference type="NCBI Taxonomy" id="357809"/>
    <lineage>
        <taxon>Bacteria</taxon>
        <taxon>Bacillati</taxon>
        <taxon>Bacillota</taxon>
        <taxon>Clostridia</taxon>
        <taxon>Lachnospirales</taxon>
        <taxon>Lachnospiraceae</taxon>
    </lineage>
</organism>
<comment type="function">
    <text evidence="1">Responsible for the release of ribosomes from messenger RNA at the termination of protein biosynthesis. May increase the efficiency of translation by recycling ribosomes from one round of translation to another.</text>
</comment>
<comment type="subcellular location">
    <subcellularLocation>
        <location evidence="1">Cytoplasm</location>
    </subcellularLocation>
</comment>
<comment type="similarity">
    <text evidence="1">Belongs to the RRF family.</text>
</comment>
<proteinExistence type="inferred from homology"/>
<accession>A9KMX5</accession>
<reference key="1">
    <citation type="submission" date="2007-11" db="EMBL/GenBank/DDBJ databases">
        <title>Complete genome sequence of Clostridium phytofermentans ISDg.</title>
        <authorList>
            <person name="Leschine S.B."/>
            <person name="Warnick T.A."/>
            <person name="Blanchard J.L."/>
            <person name="Schnell D.J."/>
            <person name="Petit E.L."/>
            <person name="LaTouf W.G."/>
            <person name="Copeland A."/>
            <person name="Lucas S."/>
            <person name="Lapidus A."/>
            <person name="Barry K."/>
            <person name="Glavina del Rio T."/>
            <person name="Dalin E."/>
            <person name="Tice H."/>
            <person name="Pitluck S."/>
            <person name="Kiss H."/>
            <person name="Brettin T."/>
            <person name="Bruce D."/>
            <person name="Detter J.C."/>
            <person name="Han C."/>
            <person name="Kuske C."/>
            <person name="Schmutz J."/>
            <person name="Larimer F."/>
            <person name="Land M."/>
            <person name="Hauser L."/>
            <person name="Kyrpides N."/>
            <person name="Kim E.A."/>
            <person name="Richardson P."/>
        </authorList>
    </citation>
    <scope>NUCLEOTIDE SEQUENCE [LARGE SCALE GENOMIC DNA]</scope>
    <source>
        <strain>ATCC 700394 / DSM 18823 / ISDg</strain>
    </source>
</reference>
<protein>
    <recommendedName>
        <fullName evidence="1">Ribosome-recycling factor</fullName>
        <shortName evidence="1">RRF</shortName>
    </recommendedName>
    <alternativeName>
        <fullName evidence="1">Ribosome-releasing factor</fullName>
    </alternativeName>
</protein>
<feature type="chain" id="PRO_0000341006" description="Ribosome-recycling factor">
    <location>
        <begin position="1"/>
        <end position="184"/>
    </location>
</feature>
<dbReference type="EMBL" id="CP000885">
    <property type="protein sequence ID" value="ABX42986.1"/>
    <property type="molecule type" value="Genomic_DNA"/>
</dbReference>
<dbReference type="RefSeq" id="WP_012200638.1">
    <property type="nucleotide sequence ID" value="NC_010001.1"/>
</dbReference>
<dbReference type="SMR" id="A9KMX5"/>
<dbReference type="STRING" id="357809.Cphy_2625"/>
<dbReference type="KEGG" id="cpy:Cphy_2625"/>
<dbReference type="eggNOG" id="COG0233">
    <property type="taxonomic scope" value="Bacteria"/>
</dbReference>
<dbReference type="HOGENOM" id="CLU_073981_2_0_9"/>
<dbReference type="OrthoDB" id="9804006at2"/>
<dbReference type="Proteomes" id="UP000000370">
    <property type="component" value="Chromosome"/>
</dbReference>
<dbReference type="GO" id="GO:0005737">
    <property type="term" value="C:cytoplasm"/>
    <property type="evidence" value="ECO:0007669"/>
    <property type="project" value="UniProtKB-SubCell"/>
</dbReference>
<dbReference type="GO" id="GO:0043023">
    <property type="term" value="F:ribosomal large subunit binding"/>
    <property type="evidence" value="ECO:0007669"/>
    <property type="project" value="TreeGrafter"/>
</dbReference>
<dbReference type="GO" id="GO:0006415">
    <property type="term" value="P:translational termination"/>
    <property type="evidence" value="ECO:0007669"/>
    <property type="project" value="UniProtKB-UniRule"/>
</dbReference>
<dbReference type="CDD" id="cd00520">
    <property type="entry name" value="RRF"/>
    <property type="match status" value="1"/>
</dbReference>
<dbReference type="FunFam" id="1.10.132.20:FF:000001">
    <property type="entry name" value="Ribosome-recycling factor"/>
    <property type="match status" value="1"/>
</dbReference>
<dbReference type="FunFam" id="3.30.1360.40:FF:000001">
    <property type="entry name" value="Ribosome-recycling factor"/>
    <property type="match status" value="1"/>
</dbReference>
<dbReference type="Gene3D" id="3.30.1360.40">
    <property type="match status" value="1"/>
</dbReference>
<dbReference type="Gene3D" id="1.10.132.20">
    <property type="entry name" value="Ribosome-recycling factor"/>
    <property type="match status" value="1"/>
</dbReference>
<dbReference type="HAMAP" id="MF_00040">
    <property type="entry name" value="RRF"/>
    <property type="match status" value="1"/>
</dbReference>
<dbReference type="InterPro" id="IPR002661">
    <property type="entry name" value="Ribosome_recyc_fac"/>
</dbReference>
<dbReference type="InterPro" id="IPR023584">
    <property type="entry name" value="Ribosome_recyc_fac_dom"/>
</dbReference>
<dbReference type="InterPro" id="IPR036191">
    <property type="entry name" value="RRF_sf"/>
</dbReference>
<dbReference type="NCBIfam" id="TIGR00496">
    <property type="entry name" value="frr"/>
    <property type="match status" value="1"/>
</dbReference>
<dbReference type="PANTHER" id="PTHR20982:SF3">
    <property type="entry name" value="MITOCHONDRIAL RIBOSOME RECYCLING FACTOR PSEUDO 1"/>
    <property type="match status" value="1"/>
</dbReference>
<dbReference type="PANTHER" id="PTHR20982">
    <property type="entry name" value="RIBOSOME RECYCLING FACTOR"/>
    <property type="match status" value="1"/>
</dbReference>
<dbReference type="Pfam" id="PF01765">
    <property type="entry name" value="RRF"/>
    <property type="match status" value="1"/>
</dbReference>
<dbReference type="SUPFAM" id="SSF55194">
    <property type="entry name" value="Ribosome recycling factor, RRF"/>
    <property type="match status" value="1"/>
</dbReference>
<gene>
    <name evidence="1" type="primary">frr</name>
    <name type="ordered locus">Cphy_2625</name>
</gene>